<protein>
    <recommendedName>
        <fullName evidence="1">2,3-bisphosphoglycerate-independent phosphoglycerate mutase</fullName>
        <shortName evidence="1">BPG-independent PGAM</shortName>
        <shortName evidence="1">Phosphoglyceromutase</shortName>
        <shortName evidence="1">aPGAM</shortName>
        <ecNumber evidence="1">5.4.2.12</ecNumber>
    </recommendedName>
</protein>
<reference key="1">
    <citation type="journal article" date="1999" name="DNA Res.">
        <title>Complete genome sequence of an aerobic hyper-thermophilic crenarchaeon, Aeropyrum pernix K1.</title>
        <authorList>
            <person name="Kawarabayasi Y."/>
            <person name="Hino Y."/>
            <person name="Horikawa H."/>
            <person name="Yamazaki S."/>
            <person name="Haikawa Y."/>
            <person name="Jin-no K."/>
            <person name="Takahashi M."/>
            <person name="Sekine M."/>
            <person name="Baba S."/>
            <person name="Ankai A."/>
            <person name="Kosugi H."/>
            <person name="Hosoyama A."/>
            <person name="Fukui S."/>
            <person name="Nagai Y."/>
            <person name="Nishijima K."/>
            <person name="Nakazawa H."/>
            <person name="Takamiya M."/>
            <person name="Masuda S."/>
            <person name="Funahashi T."/>
            <person name="Tanaka T."/>
            <person name="Kudoh Y."/>
            <person name="Yamazaki J."/>
            <person name="Kushida N."/>
            <person name="Oguchi A."/>
            <person name="Aoki K."/>
            <person name="Kubota K."/>
            <person name="Nakamura Y."/>
            <person name="Nomura N."/>
            <person name="Sako Y."/>
            <person name="Kikuchi H."/>
        </authorList>
    </citation>
    <scope>NUCLEOTIDE SEQUENCE [LARGE SCALE GENOMIC DNA]</scope>
    <source>
        <strain>ATCC 700893 / DSM 11879 / JCM 9820 / NBRC 100138 / K1</strain>
    </source>
</reference>
<evidence type="ECO:0000255" key="1">
    <source>
        <dbReference type="HAMAP-Rule" id="MF_01402"/>
    </source>
</evidence>
<name>APGM_AERPE</name>
<gene>
    <name evidence="1" type="primary">apgM</name>
    <name type="ordered locus">APE_1616.1</name>
</gene>
<sequence length="424" mass="46200">MKILYIVLDGAADSPTSPRKTLEEASKPNIDSLGSHAVCGMVYTVKPGVAPQSDYATLSLLGYNPDEYYPGRGPLEAFGAGIEMRRGDIALRANFATVDPGTLRIIDRRVGRSLTSREARELASAVDGMELEDGEGTALFRATIGHRGVLVLRHRSKPLSDAISNTDPAYERRGRFSVALEKYEPFIKLSNPLVEDEAAVLAARMLNEFTLKAVEILDSHPVNLAREKRGLLKANAILSRDAGGLPEEKPPSFQERFGLRGASIVEMVVERGISRYIGLDDIRVEIEGRAREEVYREEAARAVEALETHDLVYVHLKGPDEPGHDGSFEGKIRAVEDIDKHFFAPLLDRLSSAGLEPAFVVTSDHATPWDVGAHSGDPVPLMISHQSIQGSIGKFSETVCLRGRLGTIIGGYRIIPKTLSLLAG</sequence>
<proteinExistence type="inferred from homology"/>
<dbReference type="EC" id="5.4.2.12" evidence="1"/>
<dbReference type="EMBL" id="BA000002">
    <property type="protein sequence ID" value="BAA80616.2"/>
    <property type="molecule type" value="Genomic_DNA"/>
</dbReference>
<dbReference type="PIR" id="C72541">
    <property type="entry name" value="C72541"/>
</dbReference>
<dbReference type="RefSeq" id="WP_010866489.1">
    <property type="nucleotide sequence ID" value="NC_000854.2"/>
</dbReference>
<dbReference type="SMR" id="Q9YBI2"/>
<dbReference type="STRING" id="272557.APE_1616.1"/>
<dbReference type="DNASU" id="1446131"/>
<dbReference type="EnsemblBacteria" id="BAA80616">
    <property type="protein sequence ID" value="BAA80616"/>
    <property type="gene ID" value="APE_1616.1"/>
</dbReference>
<dbReference type="GeneID" id="1446131"/>
<dbReference type="KEGG" id="ape:APE_1616.1"/>
<dbReference type="PATRIC" id="fig|272557.25.peg.1092"/>
<dbReference type="eggNOG" id="arCOG01696">
    <property type="taxonomic scope" value="Archaea"/>
</dbReference>
<dbReference type="UniPathway" id="UPA00109">
    <property type="reaction ID" value="UER00186"/>
</dbReference>
<dbReference type="Proteomes" id="UP000002518">
    <property type="component" value="Chromosome"/>
</dbReference>
<dbReference type="GO" id="GO:0046872">
    <property type="term" value="F:metal ion binding"/>
    <property type="evidence" value="ECO:0007669"/>
    <property type="project" value="InterPro"/>
</dbReference>
<dbReference type="GO" id="GO:0004619">
    <property type="term" value="F:phosphoglycerate mutase activity"/>
    <property type="evidence" value="ECO:0007669"/>
    <property type="project" value="UniProtKB-EC"/>
</dbReference>
<dbReference type="GO" id="GO:0006096">
    <property type="term" value="P:glycolytic process"/>
    <property type="evidence" value="ECO:0007669"/>
    <property type="project" value="UniProtKB-UniRule"/>
</dbReference>
<dbReference type="CDD" id="cd16011">
    <property type="entry name" value="iPGM_like"/>
    <property type="match status" value="1"/>
</dbReference>
<dbReference type="Gene3D" id="3.40.720.10">
    <property type="entry name" value="Alkaline Phosphatase, subunit A"/>
    <property type="match status" value="1"/>
</dbReference>
<dbReference type="Gene3D" id="3.30.70.2130">
    <property type="entry name" value="Metalloenzyme domain"/>
    <property type="match status" value="1"/>
</dbReference>
<dbReference type="HAMAP" id="MF_01402_A">
    <property type="entry name" value="ApgM_A"/>
    <property type="match status" value="1"/>
</dbReference>
<dbReference type="InterPro" id="IPR017850">
    <property type="entry name" value="Alkaline_phosphatase_core_sf"/>
</dbReference>
<dbReference type="InterPro" id="IPR023665">
    <property type="entry name" value="ApgAM_prokaryotes"/>
</dbReference>
<dbReference type="InterPro" id="IPR006124">
    <property type="entry name" value="Metalloenzyme"/>
</dbReference>
<dbReference type="InterPro" id="IPR004456">
    <property type="entry name" value="Pglycerate_mutase_ApgM"/>
</dbReference>
<dbReference type="InterPro" id="IPR042253">
    <property type="entry name" value="Pglycerate_mutase_ApgM_sf"/>
</dbReference>
<dbReference type="NCBIfam" id="TIGR00306">
    <property type="entry name" value="apgM"/>
    <property type="match status" value="1"/>
</dbReference>
<dbReference type="PANTHER" id="PTHR31209">
    <property type="entry name" value="COFACTOR-INDEPENDENT PHOSPHOGLYCERATE MUTASE"/>
    <property type="match status" value="1"/>
</dbReference>
<dbReference type="PANTHER" id="PTHR31209:SF0">
    <property type="entry name" value="METALLOENZYME DOMAIN-CONTAINING PROTEIN"/>
    <property type="match status" value="1"/>
</dbReference>
<dbReference type="Pfam" id="PF01676">
    <property type="entry name" value="Metalloenzyme"/>
    <property type="match status" value="1"/>
</dbReference>
<dbReference type="Pfam" id="PF10143">
    <property type="entry name" value="PhosphMutase"/>
    <property type="match status" value="1"/>
</dbReference>
<dbReference type="PIRSF" id="PIRSF006392">
    <property type="entry name" value="IPGAM_arch"/>
    <property type="match status" value="1"/>
</dbReference>
<dbReference type="SUPFAM" id="SSF53649">
    <property type="entry name" value="Alkaline phosphatase-like"/>
    <property type="match status" value="1"/>
</dbReference>
<feature type="chain" id="PRO_0000138130" description="2,3-bisphosphoglycerate-independent phosphoglycerate mutase">
    <location>
        <begin position="1"/>
        <end position="424"/>
    </location>
</feature>
<keyword id="KW-0324">Glycolysis</keyword>
<keyword id="KW-0413">Isomerase</keyword>
<keyword id="KW-1185">Reference proteome</keyword>
<comment type="function">
    <text evidence="1">Catalyzes the interconversion of 2-phosphoglycerate and 3-phosphoglycerate.</text>
</comment>
<comment type="catalytic activity">
    <reaction evidence="1">
        <text>(2R)-2-phosphoglycerate = (2R)-3-phosphoglycerate</text>
        <dbReference type="Rhea" id="RHEA:15901"/>
        <dbReference type="ChEBI" id="CHEBI:58272"/>
        <dbReference type="ChEBI" id="CHEBI:58289"/>
        <dbReference type="EC" id="5.4.2.12"/>
    </reaction>
</comment>
<comment type="pathway">
    <text evidence="1">Carbohydrate degradation; glycolysis; pyruvate from D-glyceraldehyde 3-phosphate: step 3/5.</text>
</comment>
<comment type="similarity">
    <text evidence="1">Belongs to the BPG-independent phosphoglycerate mutase family. A-PGAM subfamily.</text>
</comment>
<accession>Q9YBI2</accession>
<organism>
    <name type="scientific">Aeropyrum pernix (strain ATCC 700893 / DSM 11879 / JCM 9820 / NBRC 100138 / K1)</name>
    <dbReference type="NCBI Taxonomy" id="272557"/>
    <lineage>
        <taxon>Archaea</taxon>
        <taxon>Thermoproteota</taxon>
        <taxon>Thermoprotei</taxon>
        <taxon>Desulfurococcales</taxon>
        <taxon>Desulfurococcaceae</taxon>
        <taxon>Aeropyrum</taxon>
    </lineage>
</organism>